<accession>A3LXG0</accession>
<keyword id="KW-0539">Nucleus</keyword>
<keyword id="KW-1185">Reference proteome</keyword>
<keyword id="KW-0677">Repeat</keyword>
<keyword id="KW-0690">Ribosome biogenesis</keyword>
<keyword id="KW-0698">rRNA processing</keyword>
<dbReference type="EMBL" id="CP000500">
    <property type="protein sequence ID" value="ABN67450.1"/>
    <property type="molecule type" value="Genomic_DNA"/>
</dbReference>
<dbReference type="RefSeq" id="XP_001385479.1">
    <property type="nucleotide sequence ID" value="XM_001385442.1"/>
</dbReference>
<dbReference type="SMR" id="A3LXG0"/>
<dbReference type="FunCoup" id="A3LXG0">
    <property type="interactions" value="943"/>
</dbReference>
<dbReference type="STRING" id="322104.A3LXG0"/>
<dbReference type="GeneID" id="4840357"/>
<dbReference type="KEGG" id="pic:PICST_32802"/>
<dbReference type="eggNOG" id="KOG2188">
    <property type="taxonomic scope" value="Eukaryota"/>
</dbReference>
<dbReference type="HOGENOM" id="CLU_008720_1_1_1"/>
<dbReference type="InParanoid" id="A3LXG0"/>
<dbReference type="OMA" id="CNSYGSH"/>
<dbReference type="OrthoDB" id="392571at2759"/>
<dbReference type="Proteomes" id="UP000002258">
    <property type="component" value="Chromosome 6"/>
</dbReference>
<dbReference type="GO" id="GO:0030686">
    <property type="term" value="C:90S preribosome"/>
    <property type="evidence" value="ECO:0007669"/>
    <property type="project" value="EnsemblFungi"/>
</dbReference>
<dbReference type="GO" id="GO:0005730">
    <property type="term" value="C:nucleolus"/>
    <property type="evidence" value="ECO:0007669"/>
    <property type="project" value="UniProtKB-SubCell"/>
</dbReference>
<dbReference type="GO" id="GO:0030688">
    <property type="term" value="C:preribosome, small subunit precursor"/>
    <property type="evidence" value="ECO:0007669"/>
    <property type="project" value="EnsemblFungi"/>
</dbReference>
<dbReference type="GO" id="GO:0032040">
    <property type="term" value="C:small-subunit processome"/>
    <property type="evidence" value="ECO:0007669"/>
    <property type="project" value="EnsemblFungi"/>
</dbReference>
<dbReference type="GO" id="GO:0003723">
    <property type="term" value="F:RNA binding"/>
    <property type="evidence" value="ECO:0007669"/>
    <property type="project" value="EnsemblFungi"/>
</dbReference>
<dbReference type="GO" id="GO:0000480">
    <property type="term" value="P:endonucleolytic cleavage in 5'-ETS of tricistronic rRNA transcript (SSU-rRNA, 5.8S rRNA, LSU-rRNA)"/>
    <property type="evidence" value="ECO:0007669"/>
    <property type="project" value="EnsemblFungi"/>
</dbReference>
<dbReference type="GO" id="GO:0000447">
    <property type="term" value="P:endonucleolytic cleavage in ITS1 to separate SSU-rRNA from 5.8S rRNA and LSU-rRNA from tricistronic rRNA transcript (SSU-rRNA, 5.8S rRNA, LSU-rRNA)"/>
    <property type="evidence" value="ECO:0007669"/>
    <property type="project" value="EnsemblFungi"/>
</dbReference>
<dbReference type="GO" id="GO:0000472">
    <property type="term" value="P:endonucleolytic cleavage to generate mature 5'-end of SSU-rRNA from (SSU-rRNA, 5.8S rRNA, LSU-rRNA)"/>
    <property type="evidence" value="ECO:0007669"/>
    <property type="project" value="EnsemblFungi"/>
</dbReference>
<dbReference type="GO" id="GO:0000056">
    <property type="term" value="P:ribosomal small subunit export from nucleus"/>
    <property type="evidence" value="ECO:0007669"/>
    <property type="project" value="EnsemblFungi"/>
</dbReference>
<dbReference type="Gene3D" id="1.25.10.10">
    <property type="entry name" value="Leucine-rich Repeat Variant"/>
    <property type="match status" value="2"/>
</dbReference>
<dbReference type="InterPro" id="IPR011989">
    <property type="entry name" value="ARM-like"/>
</dbReference>
<dbReference type="InterPro" id="IPR016024">
    <property type="entry name" value="ARM-type_fold"/>
</dbReference>
<dbReference type="InterPro" id="IPR040000">
    <property type="entry name" value="NOP9"/>
</dbReference>
<dbReference type="InterPro" id="IPR001313">
    <property type="entry name" value="Pumilio_RNA-bd_rpt"/>
</dbReference>
<dbReference type="PANTHER" id="PTHR13102">
    <property type="entry name" value="NUCLEOLAR PROTEIN 9"/>
    <property type="match status" value="1"/>
</dbReference>
<dbReference type="PANTHER" id="PTHR13102:SF0">
    <property type="entry name" value="NUCLEOLAR PROTEIN 9"/>
    <property type="match status" value="1"/>
</dbReference>
<dbReference type="Pfam" id="PF22493">
    <property type="entry name" value="PUF_NOP9"/>
    <property type="match status" value="1"/>
</dbReference>
<dbReference type="SMART" id="SM00025">
    <property type="entry name" value="Pumilio"/>
    <property type="match status" value="8"/>
</dbReference>
<dbReference type="SUPFAM" id="SSF48371">
    <property type="entry name" value="ARM repeat"/>
    <property type="match status" value="1"/>
</dbReference>
<dbReference type="PROSITE" id="PS50302">
    <property type="entry name" value="PUM"/>
    <property type="match status" value="5"/>
</dbReference>
<sequence length="711" mass="82520">MAKTKSRGRRVEKSADKLEKKAQSLFEDTKSTGEEGGDDSNEIDASLKSPFFGLVDSNELDYFKQAESTLNVNAFDSDEDREGFIRSVLEEARGKELKLVTNQICSKLMERLILFASDRQLKNIFGQFSGHFVALAHHKYSSHVLETLLVRSAALIEKELIHDDSSQNEEEREEQEEGEVTDPMEGLFIKMVDEFKPHLQGMLEHQYSSHVLRLLILILAGKELPSTTTSNSTLRSKKSKIARKMIEIKDNQDFNKSFQTPSSFKIQLRELCNSVSNNQNSKRMRELAIHKIASPVLQLLIQVEGLVDRDRTFWHLIFLKDSEDKNSQEEAFVEYLLSDSVGSHFLEATIKNDGARIKYIERLYKLYMEDRILKLAKRSTTGVYIIQALLFKLKPVDVEHILDEIIPELSNLISISENQNLDLGQRLIDASISRGNYRRDEIIEQLFLKFAPNYNVQDPQLKTTSEFIENVLQLTGSTLGNTRDDWPTAEERRRSFFLEKLMEYDYKFVICVWYNFLALPVERFIQMCFHGVFSHIVERALVVIPSSEGEPKPVLILRKRVLNLFKDQIVNMSCNSYGSHIVDALWNFSVLLPMYKDRIGTELQGDSHKVKESTYGRLVWKNWSMELFVRKKYDWKSLIKQQEQAYYGVNDENGTTSRVKKPIELKMEKLAEERRLREEAAAKSESGYKRRHEDDNEDDYAKKQKLRGRRR</sequence>
<name>NOP9_PICST</name>
<protein>
    <recommendedName>
        <fullName>Nucleolar protein 9</fullName>
    </recommendedName>
    <alternativeName>
        <fullName>Pumilio domain-containing protein NOP9</fullName>
    </alternativeName>
</protein>
<comment type="function">
    <text evidence="1">RNA-binding nucleolar protein required for pre-rRNA processing. Involved in production of 18S rRNA and assembly of small ribosomal subunit (By similarity).</text>
</comment>
<comment type="subcellular location">
    <subcellularLocation>
        <location evidence="1">Nucleus</location>
        <location evidence="1">Nucleolus</location>
    </subcellularLocation>
</comment>
<comment type="similarity">
    <text evidence="3">Belongs to the NOP9 family.</text>
</comment>
<feature type="chain" id="PRO_0000407829" description="Nucleolar protein 9">
    <location>
        <begin position="1"/>
        <end position="711"/>
    </location>
</feature>
<feature type="repeat" description="Pumilio 1">
    <location>
        <begin position="91"/>
        <end position="126"/>
    </location>
</feature>
<feature type="repeat" description="Pumilio 2">
    <location>
        <begin position="127"/>
        <end position="162"/>
    </location>
</feature>
<feature type="repeat" description="Pumilio 3">
    <location>
        <begin position="194"/>
        <end position="230"/>
    </location>
</feature>
<feature type="repeat" description="Pumilio 4">
    <location>
        <begin position="279"/>
        <end position="314"/>
    </location>
</feature>
<feature type="repeat" description="Pumilio 5">
    <location>
        <begin position="328"/>
        <end position="365"/>
    </location>
</feature>
<feature type="repeat" description="Pumilio 6">
    <location>
        <begin position="519"/>
        <end position="556"/>
    </location>
</feature>
<feature type="repeat" description="Pumilio 7">
    <location>
        <begin position="563"/>
        <end position="601"/>
    </location>
</feature>
<feature type="region of interest" description="Disordered" evidence="2">
    <location>
        <begin position="1"/>
        <end position="43"/>
    </location>
</feature>
<feature type="region of interest" description="Disordered" evidence="2">
    <location>
        <begin position="161"/>
        <end position="180"/>
    </location>
</feature>
<feature type="region of interest" description="Disordered" evidence="2">
    <location>
        <begin position="676"/>
        <end position="711"/>
    </location>
</feature>
<feature type="compositionally biased region" description="Basic and acidic residues" evidence="2">
    <location>
        <begin position="9"/>
        <end position="33"/>
    </location>
</feature>
<feature type="compositionally biased region" description="Acidic residues" evidence="2">
    <location>
        <begin position="166"/>
        <end position="180"/>
    </location>
</feature>
<feature type="compositionally biased region" description="Basic and acidic residues" evidence="2">
    <location>
        <begin position="676"/>
        <end position="702"/>
    </location>
</feature>
<proteinExistence type="inferred from homology"/>
<organism>
    <name type="scientific">Scheffersomyces stipitis (strain ATCC 58785 / CBS 6054 / NBRC 10063 / NRRL Y-11545)</name>
    <name type="common">Yeast</name>
    <name type="synonym">Pichia stipitis</name>
    <dbReference type="NCBI Taxonomy" id="322104"/>
    <lineage>
        <taxon>Eukaryota</taxon>
        <taxon>Fungi</taxon>
        <taxon>Dikarya</taxon>
        <taxon>Ascomycota</taxon>
        <taxon>Saccharomycotina</taxon>
        <taxon>Pichiomycetes</taxon>
        <taxon>Debaryomycetaceae</taxon>
        <taxon>Scheffersomyces</taxon>
    </lineage>
</organism>
<evidence type="ECO:0000250" key="1"/>
<evidence type="ECO:0000256" key="2">
    <source>
        <dbReference type="SAM" id="MobiDB-lite"/>
    </source>
</evidence>
<evidence type="ECO:0000305" key="3"/>
<reference key="1">
    <citation type="journal article" date="2007" name="Nat. Biotechnol.">
        <title>Genome sequence of the lignocellulose-bioconverting and xylose-fermenting yeast Pichia stipitis.</title>
        <authorList>
            <person name="Jeffries T.W."/>
            <person name="Grigoriev I.V."/>
            <person name="Grimwood J."/>
            <person name="Laplaza J.M."/>
            <person name="Aerts A."/>
            <person name="Salamov A."/>
            <person name="Schmutz J."/>
            <person name="Lindquist E."/>
            <person name="Dehal P."/>
            <person name="Shapiro H."/>
            <person name="Jin Y.-S."/>
            <person name="Passoth V."/>
            <person name="Richardson P.M."/>
        </authorList>
    </citation>
    <scope>NUCLEOTIDE SEQUENCE [LARGE SCALE GENOMIC DNA]</scope>
    <source>
        <strain>ATCC 58785 / CBS 6054 / NBRC 10063 / NRRL Y-11545</strain>
    </source>
</reference>
<gene>
    <name type="primary">NOP9</name>
    <name type="ORF">PICST_32802</name>
</gene>